<dbReference type="EMBL" id="AF005370">
    <property type="protein sequence ID" value="AAC58089.1"/>
    <property type="molecule type" value="Genomic_DNA"/>
</dbReference>
<dbReference type="PIR" id="T03137">
    <property type="entry name" value="T03137"/>
</dbReference>
<dbReference type="RefSeq" id="NP_065541.1">
    <property type="nucleotide sequence ID" value="NC_002531.1"/>
</dbReference>
<dbReference type="SMR" id="O36392"/>
<dbReference type="KEGG" id="vg:911762"/>
<dbReference type="Proteomes" id="UP000000941">
    <property type="component" value="Segment"/>
</dbReference>
<dbReference type="GO" id="GO:0042025">
    <property type="term" value="C:host cell nucleus"/>
    <property type="evidence" value="ECO:0007669"/>
    <property type="project" value="UniProtKB-SubCell"/>
</dbReference>
<dbReference type="GO" id="GO:0044423">
    <property type="term" value="C:virion component"/>
    <property type="evidence" value="ECO:0007669"/>
    <property type="project" value="UniProtKB-KW"/>
</dbReference>
<dbReference type="GO" id="GO:0051276">
    <property type="term" value="P:chromosome organization"/>
    <property type="evidence" value="ECO:0007669"/>
    <property type="project" value="InterPro"/>
</dbReference>
<dbReference type="HAMAP" id="MF_04012">
    <property type="entry name" value="HSV_PORTL"/>
    <property type="match status" value="1"/>
</dbReference>
<dbReference type="InterPro" id="IPR002660">
    <property type="entry name" value="Herpes_Portal"/>
</dbReference>
<dbReference type="Pfam" id="PF01763">
    <property type="entry name" value="Herpes_UL6"/>
    <property type="match status" value="1"/>
</dbReference>
<name>PORTL_ALHV1</name>
<protein>
    <recommendedName>
        <fullName evidence="1">Portal protein</fullName>
    </recommendedName>
</protein>
<accession>O36392</accession>
<keyword id="KW-0175">Coiled coil</keyword>
<keyword id="KW-1048">Host nucleus</keyword>
<keyword id="KW-1185">Reference proteome</keyword>
<keyword id="KW-0231">Viral genome packaging</keyword>
<keyword id="KW-1188">Viral release from host cell</keyword>
<keyword id="KW-0946">Virion</keyword>
<evidence type="ECO:0000255" key="1">
    <source>
        <dbReference type="HAMAP-Rule" id="MF_04012"/>
    </source>
</evidence>
<organismHost>
    <name type="scientific">Connochaetes taurinus</name>
    <name type="common">Blue wildebeest</name>
    <dbReference type="NCBI Taxonomy" id="9927"/>
</organismHost>
<proteinExistence type="inferred from homology"/>
<feature type="chain" id="PRO_0000405740" description="Portal protein">
    <location>
        <begin position="1"/>
        <end position="557"/>
    </location>
</feature>
<sequence>MCSIAVHPTIQSVNLFEILQGKYAYVKGQTLYSSVRNSGTFFRQVFTNIYRDALSSCTYEDVLQDWIKYETSIRQRWKPSEKEDNAFKWSTFQSWFSTMKMTIDGIITKAITYIINTKCIASYERYIDWVATCGVVPVLNQRPNSKVVQMFKKHLEKEYSSVASSKSLTTIFHFLVESASSVLERLTSKFIPSYLEVSVTYDQYKCEYKASYQNKEIGVEVIIPPTIGSGKVVFNSPVQRLAENVMACHRTMEHAKICQLLNTGPLKAIVCSSSATVYKDILNHLDECGKKNDPKKELMQLLIKLAENKTVNGVTDVVEDFITDVSNKLVDRSKLFGDVNAEHPSDNLKKQVSNNVFKCLTQQINQQFETISKLEEERAFFLKKINQIETQLSKCQEEPQGTGGKPYNILTSSTLDALDGLSQSGLHLTSNQVTKGQSIVNSFFSQYVPPFRELQNDLHELWEHEIMQSFNLSPIIDNQGQRLFVRYTQDTIFFLLGPFTHNILGFVDMELLIEAYCTLSFYDIAEYLYSASRLAIYIVDIGQKYCSQPNLSDGSQS</sequence>
<gene>
    <name type="primary">43</name>
</gene>
<reference key="1">
    <citation type="journal article" date="1997" name="J. Virol.">
        <title>Primary structure of the alcelaphine herpesvirus 1 genome.</title>
        <authorList>
            <person name="Ensser A."/>
            <person name="Pflanz R."/>
            <person name="Fleckenstein B."/>
        </authorList>
    </citation>
    <scope>NUCLEOTIDE SEQUENCE [LARGE SCALE GENOMIC DNA]</scope>
</reference>
<comment type="function">
    <text evidence="1">Forms a portal in the viral capsid through which viral DNA is translocated during DNA packaging. Assembles as a dodecamer at a single fivefold axe of the T=16 icosahedric capsid. Binds to the molecular motor that translocates the viral DNA, termed terminase.</text>
</comment>
<comment type="subunit">
    <text evidence="1">Homododecamerizes. Interacts with terminase subunits TRM1 and TRM3.</text>
</comment>
<comment type="subcellular location">
    <subcellularLocation>
        <location evidence="1">Virion</location>
    </subcellularLocation>
    <subcellularLocation>
        <location evidence="1">Host nucleus</location>
    </subcellularLocation>
</comment>
<comment type="similarity">
    <text evidence="1">Belongs to the herpesviridae portal protein family.</text>
</comment>
<organism>
    <name type="scientific">Alcelaphine herpesvirus 1 (strain C500)</name>
    <name type="common">AlHV-1</name>
    <name type="synonym">Malignant catarrhal fever virus</name>
    <dbReference type="NCBI Taxonomy" id="654901"/>
    <lineage>
        <taxon>Viruses</taxon>
        <taxon>Duplodnaviria</taxon>
        <taxon>Heunggongvirae</taxon>
        <taxon>Peploviricota</taxon>
        <taxon>Herviviricetes</taxon>
        <taxon>Herpesvirales</taxon>
        <taxon>Orthoherpesviridae</taxon>
        <taxon>Gammaherpesvirinae</taxon>
        <taxon>Macavirus</taxon>
        <taxon>Macavirus alcelaphinegamma1</taxon>
    </lineage>
</organism>